<evidence type="ECO:0000255" key="1">
    <source>
        <dbReference type="HAMAP-Rule" id="MF_01855"/>
    </source>
</evidence>
<gene>
    <name evidence="1" type="primary">fbp</name>
    <name type="ordered locus">Fjoh_0533</name>
</gene>
<organism>
    <name type="scientific">Flavobacterium johnsoniae (strain ATCC 17061 / DSM 2064 / JCM 8514 / BCRC 14874 / CCUG 350202 / NBRC 14942 / NCIMB 11054 / UW101)</name>
    <name type="common">Cytophaga johnsonae</name>
    <dbReference type="NCBI Taxonomy" id="376686"/>
    <lineage>
        <taxon>Bacteria</taxon>
        <taxon>Pseudomonadati</taxon>
        <taxon>Bacteroidota</taxon>
        <taxon>Flavobacteriia</taxon>
        <taxon>Flavobacteriales</taxon>
        <taxon>Flavobacteriaceae</taxon>
        <taxon>Flavobacterium</taxon>
    </lineage>
</organism>
<dbReference type="EC" id="3.1.3.11" evidence="1"/>
<dbReference type="EMBL" id="CP000685">
    <property type="protein sequence ID" value="ABQ03568.1"/>
    <property type="molecule type" value="Genomic_DNA"/>
</dbReference>
<dbReference type="RefSeq" id="WP_012022624.1">
    <property type="nucleotide sequence ID" value="NC_009441.1"/>
</dbReference>
<dbReference type="SMR" id="A5FMJ5"/>
<dbReference type="STRING" id="376686.Fjoh_0533"/>
<dbReference type="KEGG" id="fjo:Fjoh_0533"/>
<dbReference type="eggNOG" id="COG0158">
    <property type="taxonomic scope" value="Bacteria"/>
</dbReference>
<dbReference type="HOGENOM" id="CLU_039977_2_2_10"/>
<dbReference type="OrthoDB" id="9806756at2"/>
<dbReference type="UniPathway" id="UPA00138"/>
<dbReference type="Proteomes" id="UP000006694">
    <property type="component" value="Chromosome"/>
</dbReference>
<dbReference type="GO" id="GO:0005829">
    <property type="term" value="C:cytosol"/>
    <property type="evidence" value="ECO:0007669"/>
    <property type="project" value="TreeGrafter"/>
</dbReference>
<dbReference type="GO" id="GO:0042132">
    <property type="term" value="F:fructose 1,6-bisphosphate 1-phosphatase activity"/>
    <property type="evidence" value="ECO:0007669"/>
    <property type="project" value="UniProtKB-UniRule"/>
</dbReference>
<dbReference type="GO" id="GO:0000287">
    <property type="term" value="F:magnesium ion binding"/>
    <property type="evidence" value="ECO:0007669"/>
    <property type="project" value="UniProtKB-UniRule"/>
</dbReference>
<dbReference type="GO" id="GO:0030388">
    <property type="term" value="P:fructose 1,6-bisphosphate metabolic process"/>
    <property type="evidence" value="ECO:0007669"/>
    <property type="project" value="TreeGrafter"/>
</dbReference>
<dbReference type="GO" id="GO:0006002">
    <property type="term" value="P:fructose 6-phosphate metabolic process"/>
    <property type="evidence" value="ECO:0007669"/>
    <property type="project" value="TreeGrafter"/>
</dbReference>
<dbReference type="GO" id="GO:0006000">
    <property type="term" value="P:fructose metabolic process"/>
    <property type="evidence" value="ECO:0007669"/>
    <property type="project" value="TreeGrafter"/>
</dbReference>
<dbReference type="GO" id="GO:0006094">
    <property type="term" value="P:gluconeogenesis"/>
    <property type="evidence" value="ECO:0007669"/>
    <property type="project" value="UniProtKB-UniRule"/>
</dbReference>
<dbReference type="GO" id="GO:0005986">
    <property type="term" value="P:sucrose biosynthetic process"/>
    <property type="evidence" value="ECO:0007669"/>
    <property type="project" value="TreeGrafter"/>
</dbReference>
<dbReference type="CDD" id="cd00354">
    <property type="entry name" value="FBPase"/>
    <property type="match status" value="1"/>
</dbReference>
<dbReference type="FunFam" id="3.30.540.10:FF:000002">
    <property type="entry name" value="Fructose-1,6-bisphosphatase class 1"/>
    <property type="match status" value="1"/>
</dbReference>
<dbReference type="FunFam" id="3.40.190.80:FF:000001">
    <property type="entry name" value="Fructose-1,6-bisphosphatase class 1"/>
    <property type="match status" value="1"/>
</dbReference>
<dbReference type="Gene3D" id="3.40.190.80">
    <property type="match status" value="1"/>
</dbReference>
<dbReference type="Gene3D" id="3.30.540.10">
    <property type="entry name" value="Fructose-1,6-Bisphosphatase, subunit A, domain 1"/>
    <property type="match status" value="1"/>
</dbReference>
<dbReference type="HAMAP" id="MF_01855">
    <property type="entry name" value="FBPase_class1"/>
    <property type="match status" value="1"/>
</dbReference>
<dbReference type="InterPro" id="IPR044015">
    <property type="entry name" value="FBPase_C_dom"/>
</dbReference>
<dbReference type="InterPro" id="IPR000146">
    <property type="entry name" value="FBPase_class-1"/>
</dbReference>
<dbReference type="InterPro" id="IPR033391">
    <property type="entry name" value="FBPase_N"/>
</dbReference>
<dbReference type="InterPro" id="IPR028343">
    <property type="entry name" value="FBPtase"/>
</dbReference>
<dbReference type="InterPro" id="IPR020548">
    <property type="entry name" value="Fructose_bisphosphatase_AS"/>
</dbReference>
<dbReference type="NCBIfam" id="NF006778">
    <property type="entry name" value="PRK09293.1-1"/>
    <property type="match status" value="1"/>
</dbReference>
<dbReference type="NCBIfam" id="NF006779">
    <property type="entry name" value="PRK09293.1-3"/>
    <property type="match status" value="1"/>
</dbReference>
<dbReference type="PANTHER" id="PTHR11556">
    <property type="entry name" value="FRUCTOSE-1,6-BISPHOSPHATASE-RELATED"/>
    <property type="match status" value="1"/>
</dbReference>
<dbReference type="PANTHER" id="PTHR11556:SF35">
    <property type="entry name" value="SEDOHEPTULOSE-1,7-BISPHOSPHATASE, CHLOROPLASTIC"/>
    <property type="match status" value="1"/>
</dbReference>
<dbReference type="Pfam" id="PF00316">
    <property type="entry name" value="FBPase"/>
    <property type="match status" value="1"/>
</dbReference>
<dbReference type="Pfam" id="PF18913">
    <property type="entry name" value="FBPase_C"/>
    <property type="match status" value="1"/>
</dbReference>
<dbReference type="PIRSF" id="PIRSF500210">
    <property type="entry name" value="FBPtase"/>
    <property type="match status" value="1"/>
</dbReference>
<dbReference type="PIRSF" id="PIRSF000904">
    <property type="entry name" value="FBPtase_SBPase"/>
    <property type="match status" value="1"/>
</dbReference>
<dbReference type="PRINTS" id="PR00115">
    <property type="entry name" value="F16BPHPHTASE"/>
</dbReference>
<dbReference type="SUPFAM" id="SSF56655">
    <property type="entry name" value="Carbohydrate phosphatase"/>
    <property type="match status" value="1"/>
</dbReference>
<dbReference type="PROSITE" id="PS00124">
    <property type="entry name" value="FBPASE"/>
    <property type="match status" value="1"/>
</dbReference>
<feature type="chain" id="PRO_0000364555" description="Fructose-1,6-bisphosphatase class 1">
    <location>
        <begin position="1"/>
        <end position="334"/>
    </location>
</feature>
<feature type="binding site" evidence="1">
    <location>
        <position position="93"/>
    </location>
    <ligand>
        <name>Mg(2+)</name>
        <dbReference type="ChEBI" id="CHEBI:18420"/>
        <label>1</label>
    </ligand>
</feature>
<feature type="binding site" evidence="1">
    <location>
        <position position="117"/>
    </location>
    <ligand>
        <name>Mg(2+)</name>
        <dbReference type="ChEBI" id="CHEBI:18420"/>
        <label>1</label>
    </ligand>
</feature>
<feature type="binding site" evidence="1">
    <location>
        <position position="117"/>
    </location>
    <ligand>
        <name>Mg(2+)</name>
        <dbReference type="ChEBI" id="CHEBI:18420"/>
        <label>2</label>
    </ligand>
</feature>
<feature type="binding site" evidence="1">
    <location>
        <position position="119"/>
    </location>
    <ligand>
        <name>Mg(2+)</name>
        <dbReference type="ChEBI" id="CHEBI:18420"/>
        <label>1</label>
    </ligand>
</feature>
<feature type="binding site" evidence="1">
    <location>
        <begin position="120"/>
        <end position="123"/>
    </location>
    <ligand>
        <name>substrate</name>
    </ligand>
</feature>
<feature type="binding site" evidence="1">
    <location>
        <position position="120"/>
    </location>
    <ligand>
        <name>Mg(2+)</name>
        <dbReference type="ChEBI" id="CHEBI:18420"/>
        <label>2</label>
    </ligand>
</feature>
<feature type="binding site" evidence="1">
    <location>
        <position position="213"/>
    </location>
    <ligand>
        <name>substrate</name>
    </ligand>
</feature>
<feature type="binding site" evidence="1">
    <location>
        <position position="244"/>
    </location>
    <ligand>
        <name>substrate</name>
    </ligand>
</feature>
<feature type="binding site" evidence="1">
    <location>
        <position position="274"/>
    </location>
    <ligand>
        <name>substrate</name>
    </ligand>
</feature>
<feature type="binding site" evidence="1">
    <location>
        <position position="280"/>
    </location>
    <ligand>
        <name>Mg(2+)</name>
        <dbReference type="ChEBI" id="CHEBI:18420"/>
        <label>2</label>
    </ligand>
</feature>
<sequence length="334" mass="37172">MEERNKTLGEFIIENQKAFQYSSGELSRIINSIRLAAKVVNYKVNKAGLVDIIGAAGEQNIQGEDQQKLDVYANEVFIQTLINREIVCGIASEENDDFITVQGSDNCHNNKYVILMDPLDGSSNIDVNVSVGTIFSVFRRITPIGTPVTSEDFLQPGINQVAAGYVIYGTSTMLVYTTGFGVNGFTLNPAIGTFYLSHPNMKFPENGNIYSVNEGNYVHFPQGVKNYIKYCQREEEDRPYTSRYIGSLVADFHRNMIKGGIYIYPTSSKASKGKLRLLYECNPMAFIAEQAGGKATDGFGRIMEIQPTELHQRVPFFCGSKSMVEKAEEFMAAE</sequence>
<proteinExistence type="inferred from homology"/>
<comment type="catalytic activity">
    <reaction evidence="1">
        <text>beta-D-fructose 1,6-bisphosphate + H2O = beta-D-fructose 6-phosphate + phosphate</text>
        <dbReference type="Rhea" id="RHEA:11064"/>
        <dbReference type="ChEBI" id="CHEBI:15377"/>
        <dbReference type="ChEBI" id="CHEBI:32966"/>
        <dbReference type="ChEBI" id="CHEBI:43474"/>
        <dbReference type="ChEBI" id="CHEBI:57634"/>
        <dbReference type="EC" id="3.1.3.11"/>
    </reaction>
</comment>
<comment type="cofactor">
    <cofactor evidence="1">
        <name>Mg(2+)</name>
        <dbReference type="ChEBI" id="CHEBI:18420"/>
    </cofactor>
    <text evidence="1">Binds 2 magnesium ions per subunit.</text>
</comment>
<comment type="pathway">
    <text evidence="1">Carbohydrate biosynthesis; gluconeogenesis.</text>
</comment>
<comment type="subunit">
    <text evidence="1">Homotetramer.</text>
</comment>
<comment type="subcellular location">
    <subcellularLocation>
        <location evidence="1">Cytoplasm</location>
    </subcellularLocation>
</comment>
<comment type="similarity">
    <text evidence="1">Belongs to the FBPase class 1 family.</text>
</comment>
<accession>A5FMJ5</accession>
<keyword id="KW-0119">Carbohydrate metabolism</keyword>
<keyword id="KW-0963">Cytoplasm</keyword>
<keyword id="KW-0378">Hydrolase</keyword>
<keyword id="KW-0460">Magnesium</keyword>
<keyword id="KW-0479">Metal-binding</keyword>
<protein>
    <recommendedName>
        <fullName evidence="1">Fructose-1,6-bisphosphatase class 1</fullName>
        <shortName evidence="1">FBPase class 1</shortName>
        <ecNumber evidence="1">3.1.3.11</ecNumber>
    </recommendedName>
    <alternativeName>
        <fullName evidence="1">D-fructose-1,6-bisphosphate 1-phosphohydrolase class 1</fullName>
    </alternativeName>
</protein>
<name>F16PA_FLAJ1</name>
<reference key="1">
    <citation type="journal article" date="2009" name="Appl. Environ. Microbiol.">
        <title>Novel features of the polysaccharide-digesting gliding bacterium Flavobacterium johnsoniae as revealed by genome sequence analysis.</title>
        <authorList>
            <person name="McBride M.J."/>
            <person name="Xie G."/>
            <person name="Martens E.C."/>
            <person name="Lapidus A."/>
            <person name="Henrissat B."/>
            <person name="Rhodes R.G."/>
            <person name="Goltsman E."/>
            <person name="Wang W."/>
            <person name="Xu J."/>
            <person name="Hunnicutt D.W."/>
            <person name="Staroscik A.M."/>
            <person name="Hoover T.R."/>
            <person name="Cheng Y.Q."/>
            <person name="Stein J.L."/>
        </authorList>
    </citation>
    <scope>NUCLEOTIDE SEQUENCE [LARGE SCALE GENOMIC DNA]</scope>
    <source>
        <strain>ATCC 17061 / DSM 2064 / JCM 8514 / BCRC 14874 / CCUG 350202 / NBRC 14942 / NCIMB 11054 / UW101</strain>
    </source>
</reference>